<gene>
    <name type="ordered locus">MMOB1910</name>
</gene>
<evidence type="ECO:0000255" key="1">
    <source>
        <dbReference type="HAMAP-Rule" id="MF_00693"/>
    </source>
</evidence>
<reference key="1">
    <citation type="journal article" date="2004" name="Genome Res.">
        <title>The complete genome and proteome of Mycoplasma mobile.</title>
        <authorList>
            <person name="Jaffe J.D."/>
            <person name="Stange-Thomann N."/>
            <person name="Smith C."/>
            <person name="DeCaprio D."/>
            <person name="Fisher S."/>
            <person name="Butler J."/>
            <person name="Calvo S."/>
            <person name="Elkins T."/>
            <person name="FitzGerald M.G."/>
            <person name="Hafez N."/>
            <person name="Kodira C.D."/>
            <person name="Major J."/>
            <person name="Wang S."/>
            <person name="Wilkinson J."/>
            <person name="Nicol R."/>
            <person name="Nusbaum C."/>
            <person name="Birren B."/>
            <person name="Berg H.C."/>
            <person name="Church G.M."/>
        </authorList>
    </citation>
    <scope>NUCLEOTIDE SEQUENCE [LARGE SCALE GENOMIC DNA]</scope>
    <source>
        <strain>ATCC 43663 / NCTC 11711 / 163 K</strain>
    </source>
</reference>
<name>Y1910_MYCM1</name>
<proteinExistence type="inferred from homology"/>
<protein>
    <recommendedName>
        <fullName evidence="1">Probable transcriptional regulatory protein MMOB1910</fullName>
    </recommendedName>
</protein>
<keyword id="KW-0963">Cytoplasm</keyword>
<keyword id="KW-0238">DNA-binding</keyword>
<keyword id="KW-1185">Reference proteome</keyword>
<keyword id="KW-0804">Transcription</keyword>
<keyword id="KW-0805">Transcription regulation</keyword>
<organism>
    <name type="scientific">Mycoplasma mobile (strain ATCC 43663 / 163K / NCTC 11711)</name>
    <name type="common">Mesomycoplasma mobile</name>
    <dbReference type="NCBI Taxonomy" id="267748"/>
    <lineage>
        <taxon>Bacteria</taxon>
        <taxon>Bacillati</taxon>
        <taxon>Mycoplasmatota</taxon>
        <taxon>Mycoplasmoidales</taxon>
        <taxon>Metamycoplasmataceae</taxon>
        <taxon>Mesomycoplasma</taxon>
    </lineage>
</organism>
<comment type="subcellular location">
    <subcellularLocation>
        <location evidence="1">Cytoplasm</location>
    </subcellularLocation>
</comment>
<comment type="similarity">
    <text evidence="1">Belongs to the TACO1 family.</text>
</comment>
<accession>Q6KI99</accession>
<sequence length="244" mass="26877">MAGHSKWANIKHRKGAQDAARSKIFMKLSKEIFVAASGPGGADPETNPSLRLAVSKAKAQSMPKANIEKALSKASGNSKNASEFKELIYSGSLPGGAIILVICLTDNLNRAISNIKAAFSKIGGQLGKSGSIPYIFERKGVLDILKEEYENSDQLMLEALDAGAEDVQTFEDFSRIITNPSNFQEVKDKIDKALSLENYATAEIQYLPNTTVSFEKEKLEKLETWIETLEDNEDVQEIYHNIDF</sequence>
<feature type="chain" id="PRO_0000175848" description="Probable transcriptional regulatory protein MMOB1910">
    <location>
        <begin position="1"/>
        <end position="244"/>
    </location>
</feature>
<dbReference type="EMBL" id="AE017308">
    <property type="protein sequence ID" value="AAT27677.1"/>
    <property type="molecule type" value="Genomic_DNA"/>
</dbReference>
<dbReference type="RefSeq" id="WP_011264711.1">
    <property type="nucleotide sequence ID" value="NC_006908.1"/>
</dbReference>
<dbReference type="SMR" id="Q6KI99"/>
<dbReference type="STRING" id="267748.MMOB1910"/>
<dbReference type="KEGG" id="mmo:MMOB1910"/>
<dbReference type="eggNOG" id="COG0217">
    <property type="taxonomic scope" value="Bacteria"/>
</dbReference>
<dbReference type="HOGENOM" id="CLU_062974_2_2_14"/>
<dbReference type="OrthoDB" id="9781053at2"/>
<dbReference type="Proteomes" id="UP000009072">
    <property type="component" value="Chromosome"/>
</dbReference>
<dbReference type="GO" id="GO:0005829">
    <property type="term" value="C:cytosol"/>
    <property type="evidence" value="ECO:0007669"/>
    <property type="project" value="TreeGrafter"/>
</dbReference>
<dbReference type="GO" id="GO:0003677">
    <property type="term" value="F:DNA binding"/>
    <property type="evidence" value="ECO:0007669"/>
    <property type="project" value="UniProtKB-UniRule"/>
</dbReference>
<dbReference type="GO" id="GO:0006355">
    <property type="term" value="P:regulation of DNA-templated transcription"/>
    <property type="evidence" value="ECO:0007669"/>
    <property type="project" value="UniProtKB-UniRule"/>
</dbReference>
<dbReference type="FunFam" id="1.10.10.200:FF:000002">
    <property type="entry name" value="Probable transcriptional regulatory protein CLM62_37755"/>
    <property type="match status" value="1"/>
</dbReference>
<dbReference type="Gene3D" id="1.10.10.200">
    <property type="match status" value="1"/>
</dbReference>
<dbReference type="Gene3D" id="3.30.70.980">
    <property type="match status" value="2"/>
</dbReference>
<dbReference type="HAMAP" id="MF_00693">
    <property type="entry name" value="Transcrip_reg_TACO1"/>
    <property type="match status" value="1"/>
</dbReference>
<dbReference type="InterPro" id="IPR017856">
    <property type="entry name" value="Integrase-like_N"/>
</dbReference>
<dbReference type="InterPro" id="IPR048300">
    <property type="entry name" value="TACO1_YebC-like_2nd/3rd_dom"/>
</dbReference>
<dbReference type="InterPro" id="IPR049083">
    <property type="entry name" value="TACO1_YebC_N"/>
</dbReference>
<dbReference type="InterPro" id="IPR002876">
    <property type="entry name" value="Transcrip_reg_TACO1-like"/>
</dbReference>
<dbReference type="InterPro" id="IPR026564">
    <property type="entry name" value="Transcrip_reg_TACO1-like_dom3"/>
</dbReference>
<dbReference type="InterPro" id="IPR029072">
    <property type="entry name" value="YebC-like"/>
</dbReference>
<dbReference type="NCBIfam" id="NF001030">
    <property type="entry name" value="PRK00110.1"/>
    <property type="match status" value="1"/>
</dbReference>
<dbReference type="NCBIfam" id="NF009044">
    <property type="entry name" value="PRK12378.1"/>
    <property type="match status" value="1"/>
</dbReference>
<dbReference type="NCBIfam" id="TIGR01033">
    <property type="entry name" value="YebC/PmpR family DNA-binding transcriptional regulator"/>
    <property type="match status" value="1"/>
</dbReference>
<dbReference type="PANTHER" id="PTHR12532:SF6">
    <property type="entry name" value="TRANSCRIPTIONAL REGULATORY PROTEIN YEBC-RELATED"/>
    <property type="match status" value="1"/>
</dbReference>
<dbReference type="PANTHER" id="PTHR12532">
    <property type="entry name" value="TRANSLATIONAL ACTIVATOR OF CYTOCHROME C OXIDASE 1"/>
    <property type="match status" value="1"/>
</dbReference>
<dbReference type="Pfam" id="PF20772">
    <property type="entry name" value="TACO1_YebC_N"/>
    <property type="match status" value="1"/>
</dbReference>
<dbReference type="Pfam" id="PF01709">
    <property type="entry name" value="Transcrip_reg"/>
    <property type="match status" value="1"/>
</dbReference>
<dbReference type="SUPFAM" id="SSF75625">
    <property type="entry name" value="YebC-like"/>
    <property type="match status" value="1"/>
</dbReference>